<accession>B3Q0Y0</accession>
<reference key="1">
    <citation type="journal article" date="2010" name="Appl. Environ. Microbiol.">
        <title>Conserved symbiotic plasmid DNA sequences in the multireplicon pangenomic structure of Rhizobium etli.</title>
        <authorList>
            <person name="Gonzalez V."/>
            <person name="Acosta J.L."/>
            <person name="Santamaria R.I."/>
            <person name="Bustos P."/>
            <person name="Fernandez J.L."/>
            <person name="Hernandez Gonzalez I.L."/>
            <person name="Diaz R."/>
            <person name="Flores M."/>
            <person name="Palacios R."/>
            <person name="Mora J."/>
            <person name="Davila G."/>
        </authorList>
    </citation>
    <scope>NUCLEOTIDE SEQUENCE [LARGE SCALE GENOMIC DNA]</scope>
    <source>
        <strain>CIAT 652</strain>
    </source>
</reference>
<name>QUEC_RHIE6</name>
<proteinExistence type="inferred from homology"/>
<keyword id="KW-0067">ATP-binding</keyword>
<keyword id="KW-0436">Ligase</keyword>
<keyword id="KW-0479">Metal-binding</keyword>
<keyword id="KW-0547">Nucleotide-binding</keyword>
<keyword id="KW-0671">Queuosine biosynthesis</keyword>
<keyword id="KW-0862">Zinc</keyword>
<sequence>MKTIVVCSGGLDSVSLAHKMAAEQQLIGLVSFDYGQRHRKELDFAARCAARLAVPHHIIDIAAIGGHLSGSALTDNVEVPDGHYAEETMKATVVPNRNAIMLAIAFGLAAAQKADAVAVAVHGGDHFIYPDCRPGFIDAFQRMQNAALDGYASVRLLAPYVDVSKAAIVADGEKHATPFAETWSCYKGGRLHCGRCGTCVERREAFHLAGISDPTDYEDRDFWKAAVSQYSAKEVR</sequence>
<dbReference type="EC" id="6.3.4.20" evidence="1"/>
<dbReference type="EMBL" id="CP001074">
    <property type="protein sequence ID" value="ACE92921.1"/>
    <property type="molecule type" value="Genomic_DNA"/>
</dbReference>
<dbReference type="SMR" id="B3Q0Y0"/>
<dbReference type="KEGG" id="rec:RHECIAT_CH0003984"/>
<dbReference type="eggNOG" id="COG0603">
    <property type="taxonomic scope" value="Bacteria"/>
</dbReference>
<dbReference type="HOGENOM" id="CLU_081854_1_0_5"/>
<dbReference type="UniPathway" id="UPA00391"/>
<dbReference type="Proteomes" id="UP000008817">
    <property type="component" value="Chromosome"/>
</dbReference>
<dbReference type="GO" id="GO:0005524">
    <property type="term" value="F:ATP binding"/>
    <property type="evidence" value="ECO:0007669"/>
    <property type="project" value="UniProtKB-UniRule"/>
</dbReference>
<dbReference type="GO" id="GO:0016879">
    <property type="term" value="F:ligase activity, forming carbon-nitrogen bonds"/>
    <property type="evidence" value="ECO:0007669"/>
    <property type="project" value="UniProtKB-UniRule"/>
</dbReference>
<dbReference type="GO" id="GO:0008270">
    <property type="term" value="F:zinc ion binding"/>
    <property type="evidence" value="ECO:0007669"/>
    <property type="project" value="UniProtKB-UniRule"/>
</dbReference>
<dbReference type="GO" id="GO:0008616">
    <property type="term" value="P:queuosine biosynthetic process"/>
    <property type="evidence" value="ECO:0007669"/>
    <property type="project" value="UniProtKB-UniRule"/>
</dbReference>
<dbReference type="CDD" id="cd01995">
    <property type="entry name" value="QueC-like"/>
    <property type="match status" value="1"/>
</dbReference>
<dbReference type="Gene3D" id="3.40.50.620">
    <property type="entry name" value="HUPs"/>
    <property type="match status" value="1"/>
</dbReference>
<dbReference type="HAMAP" id="MF_01633">
    <property type="entry name" value="QueC"/>
    <property type="match status" value="1"/>
</dbReference>
<dbReference type="InterPro" id="IPR018317">
    <property type="entry name" value="QueC"/>
</dbReference>
<dbReference type="InterPro" id="IPR014729">
    <property type="entry name" value="Rossmann-like_a/b/a_fold"/>
</dbReference>
<dbReference type="NCBIfam" id="TIGR00364">
    <property type="entry name" value="7-cyano-7-deazaguanine synthase QueC"/>
    <property type="match status" value="1"/>
</dbReference>
<dbReference type="PANTHER" id="PTHR42914">
    <property type="entry name" value="7-CYANO-7-DEAZAGUANINE SYNTHASE"/>
    <property type="match status" value="1"/>
</dbReference>
<dbReference type="PANTHER" id="PTHR42914:SF1">
    <property type="entry name" value="7-CYANO-7-DEAZAGUANINE SYNTHASE"/>
    <property type="match status" value="1"/>
</dbReference>
<dbReference type="Pfam" id="PF06508">
    <property type="entry name" value="QueC"/>
    <property type="match status" value="1"/>
</dbReference>
<dbReference type="PIRSF" id="PIRSF006293">
    <property type="entry name" value="ExsB"/>
    <property type="match status" value="1"/>
</dbReference>
<dbReference type="SUPFAM" id="SSF52402">
    <property type="entry name" value="Adenine nucleotide alpha hydrolases-like"/>
    <property type="match status" value="1"/>
</dbReference>
<evidence type="ECO:0000255" key="1">
    <source>
        <dbReference type="HAMAP-Rule" id="MF_01633"/>
    </source>
</evidence>
<organism>
    <name type="scientific">Rhizobium etli (strain CIAT 652)</name>
    <dbReference type="NCBI Taxonomy" id="491916"/>
    <lineage>
        <taxon>Bacteria</taxon>
        <taxon>Pseudomonadati</taxon>
        <taxon>Pseudomonadota</taxon>
        <taxon>Alphaproteobacteria</taxon>
        <taxon>Hyphomicrobiales</taxon>
        <taxon>Rhizobiaceae</taxon>
        <taxon>Rhizobium/Agrobacterium group</taxon>
        <taxon>Rhizobium</taxon>
    </lineage>
</organism>
<feature type="chain" id="PRO_1000186624" description="7-cyano-7-deazaguanine synthase">
    <location>
        <begin position="1"/>
        <end position="236"/>
    </location>
</feature>
<feature type="binding site" evidence="1">
    <location>
        <begin position="7"/>
        <end position="17"/>
    </location>
    <ligand>
        <name>ATP</name>
        <dbReference type="ChEBI" id="CHEBI:30616"/>
    </ligand>
</feature>
<feature type="binding site" evidence="1">
    <location>
        <position position="185"/>
    </location>
    <ligand>
        <name>Zn(2+)</name>
        <dbReference type="ChEBI" id="CHEBI:29105"/>
    </ligand>
</feature>
<feature type="binding site" evidence="1">
    <location>
        <position position="193"/>
    </location>
    <ligand>
        <name>Zn(2+)</name>
        <dbReference type="ChEBI" id="CHEBI:29105"/>
    </ligand>
</feature>
<feature type="binding site" evidence="1">
    <location>
        <position position="196"/>
    </location>
    <ligand>
        <name>Zn(2+)</name>
        <dbReference type="ChEBI" id="CHEBI:29105"/>
    </ligand>
</feature>
<feature type="binding site" evidence="1">
    <location>
        <position position="199"/>
    </location>
    <ligand>
        <name>Zn(2+)</name>
        <dbReference type="ChEBI" id="CHEBI:29105"/>
    </ligand>
</feature>
<gene>
    <name evidence="1" type="primary">queC</name>
    <name type="ordered locus">RHECIAT_CH0003984</name>
</gene>
<protein>
    <recommendedName>
        <fullName evidence="1">7-cyano-7-deazaguanine synthase</fullName>
        <ecNumber evidence="1">6.3.4.20</ecNumber>
    </recommendedName>
    <alternativeName>
        <fullName evidence="1">7-cyano-7-carbaguanine synthase</fullName>
    </alternativeName>
    <alternativeName>
        <fullName evidence="1">PreQ(0) synthase</fullName>
    </alternativeName>
    <alternativeName>
        <fullName evidence="1">Queuosine biosynthesis protein QueC</fullName>
    </alternativeName>
</protein>
<comment type="function">
    <text evidence="1">Catalyzes the ATP-dependent conversion of 7-carboxy-7-deazaguanine (CDG) to 7-cyano-7-deazaguanine (preQ(0)).</text>
</comment>
<comment type="catalytic activity">
    <reaction evidence="1">
        <text>7-carboxy-7-deazaguanine + NH4(+) + ATP = 7-cyano-7-deazaguanine + ADP + phosphate + H2O + H(+)</text>
        <dbReference type="Rhea" id="RHEA:27982"/>
        <dbReference type="ChEBI" id="CHEBI:15377"/>
        <dbReference type="ChEBI" id="CHEBI:15378"/>
        <dbReference type="ChEBI" id="CHEBI:28938"/>
        <dbReference type="ChEBI" id="CHEBI:30616"/>
        <dbReference type="ChEBI" id="CHEBI:43474"/>
        <dbReference type="ChEBI" id="CHEBI:45075"/>
        <dbReference type="ChEBI" id="CHEBI:61036"/>
        <dbReference type="ChEBI" id="CHEBI:456216"/>
        <dbReference type="EC" id="6.3.4.20"/>
    </reaction>
</comment>
<comment type="cofactor">
    <cofactor evidence="1">
        <name>Zn(2+)</name>
        <dbReference type="ChEBI" id="CHEBI:29105"/>
    </cofactor>
    <text evidence="1">Binds 1 zinc ion per subunit.</text>
</comment>
<comment type="pathway">
    <text evidence="1">Purine metabolism; 7-cyano-7-deazaguanine biosynthesis.</text>
</comment>
<comment type="similarity">
    <text evidence="1">Belongs to the QueC family.</text>
</comment>